<keyword id="KW-0687">Ribonucleoprotein</keyword>
<keyword id="KW-0689">Ribosomal protein</keyword>
<gene>
    <name type="primary">RpS24</name>
</gene>
<evidence type="ECO:0000256" key="1">
    <source>
        <dbReference type="SAM" id="MobiDB-lite"/>
    </source>
</evidence>
<evidence type="ECO:0000305" key="2"/>
<organism>
    <name type="scientific">Spodoptera frugiperda</name>
    <name type="common">Fall armyworm</name>
    <dbReference type="NCBI Taxonomy" id="7108"/>
    <lineage>
        <taxon>Eukaryota</taxon>
        <taxon>Metazoa</taxon>
        <taxon>Ecdysozoa</taxon>
        <taxon>Arthropoda</taxon>
        <taxon>Hexapoda</taxon>
        <taxon>Insecta</taxon>
        <taxon>Pterygota</taxon>
        <taxon>Neoptera</taxon>
        <taxon>Endopterygota</taxon>
        <taxon>Lepidoptera</taxon>
        <taxon>Glossata</taxon>
        <taxon>Ditrysia</taxon>
        <taxon>Noctuoidea</taxon>
        <taxon>Noctuidae</taxon>
        <taxon>Amphipyrinae</taxon>
        <taxon>Spodoptera</taxon>
    </lineage>
</organism>
<reference key="1">
    <citation type="journal article" date="2003" name="Bioinformatics">
        <title>Annotation pattern of ESTs from Spodoptera frugiperda Sf9 cells and analysis of the ribosomal protein genes reveal insect-specific features and unexpectedly low codon usage bias.</title>
        <authorList>
            <person name="Landais I."/>
            <person name="Ogliastro M."/>
            <person name="Mita K."/>
            <person name="Nohata J."/>
            <person name="Lopez-Ferber M."/>
            <person name="Duonor-Cerutti M."/>
            <person name="Shimada T."/>
            <person name="Fournier P."/>
            <person name="Devauchelle G."/>
        </authorList>
    </citation>
    <scope>NUCLEOTIDE SEQUENCE [LARGE SCALE MRNA]</scope>
</reference>
<name>RS24_SPOFR</name>
<sequence length="132" mass="15170">MTEGTATIRTRKFMTNRLLARKQMVCDVLHPGKPTVSKTEIREKLAKMYKVTPDVVFVFGFKTNFGGGKSTGFALIYDTLDLAKKFEPKHRLARHGLYEKKRPTRKQRKERKNRMKKVRGTKKSKVGAAAKK</sequence>
<feature type="chain" id="PRO_0000137631" description="Small ribosomal subunit protein eS24">
    <location>
        <begin position="1"/>
        <end position="132"/>
    </location>
</feature>
<feature type="region of interest" description="Disordered" evidence="1">
    <location>
        <begin position="92"/>
        <end position="132"/>
    </location>
</feature>
<feature type="compositionally biased region" description="Basic and acidic residues" evidence="1">
    <location>
        <begin position="92"/>
        <end position="101"/>
    </location>
</feature>
<feature type="compositionally biased region" description="Basic residues" evidence="1">
    <location>
        <begin position="102"/>
        <end position="132"/>
    </location>
</feature>
<proteinExistence type="evidence at transcript level"/>
<dbReference type="EMBL" id="AF400220">
    <property type="protein sequence ID" value="AAK92192.1"/>
    <property type="molecule type" value="mRNA"/>
</dbReference>
<dbReference type="SMR" id="Q962Q6"/>
<dbReference type="EnsemblMetazoa" id="XM_035577015.2">
    <property type="protein sequence ID" value="XP_035432908.1"/>
    <property type="gene ID" value="LOC118264494"/>
</dbReference>
<dbReference type="OrthoDB" id="5571754at2759"/>
<dbReference type="Proteomes" id="UP000829999">
    <property type="component" value="Unplaced"/>
</dbReference>
<dbReference type="GO" id="GO:1990904">
    <property type="term" value="C:ribonucleoprotein complex"/>
    <property type="evidence" value="ECO:0007669"/>
    <property type="project" value="UniProtKB-KW"/>
</dbReference>
<dbReference type="GO" id="GO:0005840">
    <property type="term" value="C:ribosome"/>
    <property type="evidence" value="ECO:0007669"/>
    <property type="project" value="UniProtKB-KW"/>
</dbReference>
<dbReference type="GO" id="GO:0003735">
    <property type="term" value="F:structural constituent of ribosome"/>
    <property type="evidence" value="ECO:0007669"/>
    <property type="project" value="InterPro"/>
</dbReference>
<dbReference type="GO" id="GO:0006412">
    <property type="term" value="P:translation"/>
    <property type="evidence" value="ECO:0007669"/>
    <property type="project" value="InterPro"/>
</dbReference>
<dbReference type="FunFam" id="3.30.70.3370:FF:000001">
    <property type="entry name" value="40S ribosomal protein S24"/>
    <property type="match status" value="1"/>
</dbReference>
<dbReference type="Gene3D" id="3.30.70.3370">
    <property type="match status" value="1"/>
</dbReference>
<dbReference type="HAMAP" id="MF_00545">
    <property type="entry name" value="Ribosomal_eS24"/>
    <property type="match status" value="1"/>
</dbReference>
<dbReference type="InterPro" id="IPR053709">
    <property type="entry name" value="eRP_eS24_sf"/>
</dbReference>
<dbReference type="InterPro" id="IPR001976">
    <property type="entry name" value="Ribosomal_eS24"/>
</dbReference>
<dbReference type="InterPro" id="IPR018098">
    <property type="entry name" value="Ribosomal_eS24_CS"/>
</dbReference>
<dbReference type="InterPro" id="IPR012678">
    <property type="entry name" value="Ribosomal_uL23/eL15/eS24_sf"/>
</dbReference>
<dbReference type="PANTHER" id="PTHR10496">
    <property type="entry name" value="40S RIBOSOMAL PROTEIN S24"/>
    <property type="match status" value="1"/>
</dbReference>
<dbReference type="Pfam" id="PF01282">
    <property type="entry name" value="Ribosomal_S24e"/>
    <property type="match status" value="1"/>
</dbReference>
<dbReference type="SUPFAM" id="SSF54189">
    <property type="entry name" value="Ribosomal proteins S24e, L23 and L15e"/>
    <property type="match status" value="1"/>
</dbReference>
<dbReference type="PROSITE" id="PS00529">
    <property type="entry name" value="RIBOSOMAL_S24E"/>
    <property type="match status" value="1"/>
</dbReference>
<comment type="similarity">
    <text evidence="2">Belongs to the eukaryotic ribosomal protein eS24 family.</text>
</comment>
<accession>Q962Q6</accession>
<protein>
    <recommendedName>
        <fullName evidence="2">Small ribosomal subunit protein eS24</fullName>
    </recommendedName>
    <alternativeName>
        <fullName>40S ribosomal protein S24</fullName>
    </alternativeName>
</protein>